<evidence type="ECO:0000255" key="1">
    <source>
        <dbReference type="HAMAP-Rule" id="MF_01217"/>
    </source>
</evidence>
<evidence type="ECO:0000255" key="2">
    <source>
        <dbReference type="PROSITE-ProRule" id="PRU00258"/>
    </source>
</evidence>
<organism>
    <name type="scientific">Rhodospirillum centenum (strain ATCC 51521 / SW)</name>
    <dbReference type="NCBI Taxonomy" id="414684"/>
    <lineage>
        <taxon>Bacteria</taxon>
        <taxon>Pseudomonadati</taxon>
        <taxon>Pseudomonadota</taxon>
        <taxon>Alphaproteobacteria</taxon>
        <taxon>Rhodospirillales</taxon>
        <taxon>Rhodospirillaceae</taxon>
        <taxon>Rhodospirillum</taxon>
    </lineage>
</organism>
<proteinExistence type="inferred from homology"/>
<keyword id="KW-0963">Cytoplasm</keyword>
<keyword id="KW-0275">Fatty acid biosynthesis</keyword>
<keyword id="KW-0276">Fatty acid metabolism</keyword>
<keyword id="KW-0444">Lipid biosynthesis</keyword>
<keyword id="KW-0443">Lipid metabolism</keyword>
<keyword id="KW-0596">Phosphopantetheine</keyword>
<keyword id="KW-0597">Phosphoprotein</keyword>
<keyword id="KW-1185">Reference proteome</keyword>
<dbReference type="EMBL" id="CP000613">
    <property type="protein sequence ID" value="ACI98973.1"/>
    <property type="molecule type" value="Genomic_DNA"/>
</dbReference>
<dbReference type="RefSeq" id="WP_012566758.1">
    <property type="nucleotide sequence ID" value="NC_011420.2"/>
</dbReference>
<dbReference type="SMR" id="B6IN76"/>
<dbReference type="STRING" id="414684.RC1_1570"/>
<dbReference type="KEGG" id="rce:RC1_1570"/>
<dbReference type="eggNOG" id="COG0236">
    <property type="taxonomic scope" value="Bacteria"/>
</dbReference>
<dbReference type="HOGENOM" id="CLU_108696_5_1_5"/>
<dbReference type="OrthoDB" id="9804551at2"/>
<dbReference type="UniPathway" id="UPA00094"/>
<dbReference type="Proteomes" id="UP000001591">
    <property type="component" value="Chromosome"/>
</dbReference>
<dbReference type="GO" id="GO:0005829">
    <property type="term" value="C:cytosol"/>
    <property type="evidence" value="ECO:0007669"/>
    <property type="project" value="TreeGrafter"/>
</dbReference>
<dbReference type="GO" id="GO:0016020">
    <property type="term" value="C:membrane"/>
    <property type="evidence" value="ECO:0007669"/>
    <property type="project" value="GOC"/>
</dbReference>
<dbReference type="GO" id="GO:0000035">
    <property type="term" value="F:acyl binding"/>
    <property type="evidence" value="ECO:0007669"/>
    <property type="project" value="TreeGrafter"/>
</dbReference>
<dbReference type="GO" id="GO:0000036">
    <property type="term" value="F:acyl carrier activity"/>
    <property type="evidence" value="ECO:0007669"/>
    <property type="project" value="UniProtKB-UniRule"/>
</dbReference>
<dbReference type="GO" id="GO:0031177">
    <property type="term" value="F:phosphopantetheine binding"/>
    <property type="evidence" value="ECO:0007669"/>
    <property type="project" value="InterPro"/>
</dbReference>
<dbReference type="GO" id="GO:0009245">
    <property type="term" value="P:lipid A biosynthetic process"/>
    <property type="evidence" value="ECO:0007669"/>
    <property type="project" value="TreeGrafter"/>
</dbReference>
<dbReference type="FunFam" id="1.10.1200.10:FF:000001">
    <property type="entry name" value="Acyl carrier protein"/>
    <property type="match status" value="1"/>
</dbReference>
<dbReference type="Gene3D" id="1.10.1200.10">
    <property type="entry name" value="ACP-like"/>
    <property type="match status" value="1"/>
</dbReference>
<dbReference type="HAMAP" id="MF_01217">
    <property type="entry name" value="Acyl_carrier"/>
    <property type="match status" value="1"/>
</dbReference>
<dbReference type="InterPro" id="IPR003231">
    <property type="entry name" value="ACP"/>
</dbReference>
<dbReference type="InterPro" id="IPR036736">
    <property type="entry name" value="ACP-like_sf"/>
</dbReference>
<dbReference type="InterPro" id="IPR020806">
    <property type="entry name" value="PKS_PP-bd"/>
</dbReference>
<dbReference type="InterPro" id="IPR009081">
    <property type="entry name" value="PP-bd_ACP"/>
</dbReference>
<dbReference type="InterPro" id="IPR006162">
    <property type="entry name" value="Ppantetheine_attach_site"/>
</dbReference>
<dbReference type="NCBIfam" id="TIGR00517">
    <property type="entry name" value="acyl_carrier"/>
    <property type="match status" value="1"/>
</dbReference>
<dbReference type="NCBIfam" id="NF002148">
    <property type="entry name" value="PRK00982.1-2"/>
    <property type="match status" value="1"/>
</dbReference>
<dbReference type="NCBIfam" id="NF002149">
    <property type="entry name" value="PRK00982.1-3"/>
    <property type="match status" value="1"/>
</dbReference>
<dbReference type="NCBIfam" id="NF002150">
    <property type="entry name" value="PRK00982.1-4"/>
    <property type="match status" value="1"/>
</dbReference>
<dbReference type="NCBIfam" id="NF002151">
    <property type="entry name" value="PRK00982.1-5"/>
    <property type="match status" value="1"/>
</dbReference>
<dbReference type="PANTHER" id="PTHR20863">
    <property type="entry name" value="ACYL CARRIER PROTEIN"/>
    <property type="match status" value="1"/>
</dbReference>
<dbReference type="PANTHER" id="PTHR20863:SF76">
    <property type="entry name" value="CARRIER DOMAIN-CONTAINING PROTEIN"/>
    <property type="match status" value="1"/>
</dbReference>
<dbReference type="Pfam" id="PF00550">
    <property type="entry name" value="PP-binding"/>
    <property type="match status" value="1"/>
</dbReference>
<dbReference type="SMART" id="SM00823">
    <property type="entry name" value="PKS_PP"/>
    <property type="match status" value="1"/>
</dbReference>
<dbReference type="SUPFAM" id="SSF47336">
    <property type="entry name" value="ACP-like"/>
    <property type="match status" value="1"/>
</dbReference>
<dbReference type="PROSITE" id="PS50075">
    <property type="entry name" value="CARRIER"/>
    <property type="match status" value="1"/>
</dbReference>
<dbReference type="PROSITE" id="PS00012">
    <property type="entry name" value="PHOSPHOPANTETHEINE"/>
    <property type="match status" value="1"/>
</dbReference>
<name>ACP_RHOCS</name>
<reference key="1">
    <citation type="submission" date="2007-03" db="EMBL/GenBank/DDBJ databases">
        <title>Genome sequence of Rhodospirillum centenum.</title>
        <authorList>
            <person name="Touchman J.W."/>
            <person name="Bauer C."/>
            <person name="Blankenship R.E."/>
        </authorList>
    </citation>
    <scope>NUCLEOTIDE SEQUENCE [LARGE SCALE GENOMIC DNA]</scope>
    <source>
        <strain>ATCC 51521 / SW</strain>
    </source>
</reference>
<sequence>MSDTAERVKKIVIEHLGVEESKVTESASFIDDLGADSLDTVELVMAFEEEFGIEIPDDAAEKILTVKDAIDFINQKTAA</sequence>
<gene>
    <name evidence="1" type="primary">acpP</name>
    <name type="ordered locus">RC1_1570</name>
</gene>
<accession>B6IN76</accession>
<feature type="chain" id="PRO_1000139058" description="Acyl carrier protein">
    <location>
        <begin position="1"/>
        <end position="79"/>
    </location>
</feature>
<feature type="domain" description="Carrier" evidence="2">
    <location>
        <begin position="2"/>
        <end position="77"/>
    </location>
</feature>
<feature type="modified residue" description="O-(pantetheine 4'-phosphoryl)serine" evidence="2">
    <location>
        <position position="37"/>
    </location>
</feature>
<protein>
    <recommendedName>
        <fullName evidence="1">Acyl carrier protein</fullName>
        <shortName evidence="1">ACP</shortName>
    </recommendedName>
</protein>
<comment type="function">
    <text evidence="1">Carrier of the growing fatty acid chain in fatty acid biosynthesis.</text>
</comment>
<comment type="pathway">
    <text evidence="1">Lipid metabolism; fatty acid biosynthesis.</text>
</comment>
<comment type="subcellular location">
    <subcellularLocation>
        <location evidence="1">Cytoplasm</location>
    </subcellularLocation>
</comment>
<comment type="PTM">
    <text evidence="1">4'-phosphopantetheine is transferred from CoA to a specific serine of apo-ACP by AcpS. This modification is essential for activity because fatty acids are bound in thioester linkage to the sulfhydryl of the prosthetic group.</text>
</comment>
<comment type="similarity">
    <text evidence="1">Belongs to the acyl carrier protein (ACP) family.</text>
</comment>